<reference key="1">
    <citation type="journal article" date="2005" name="PLoS Biol.">
        <title>Major structural differences and novel potential virulence mechanisms from the genomes of multiple Campylobacter species.</title>
        <authorList>
            <person name="Fouts D.E."/>
            <person name="Mongodin E.F."/>
            <person name="Mandrell R.E."/>
            <person name="Miller W.G."/>
            <person name="Rasko D.A."/>
            <person name="Ravel J."/>
            <person name="Brinkac L.M."/>
            <person name="DeBoy R.T."/>
            <person name="Parker C.T."/>
            <person name="Daugherty S.C."/>
            <person name="Dodson R.J."/>
            <person name="Durkin A.S."/>
            <person name="Madupu R."/>
            <person name="Sullivan S.A."/>
            <person name="Shetty J.U."/>
            <person name="Ayodeji M.A."/>
            <person name="Shvartsbeyn A."/>
            <person name="Schatz M.C."/>
            <person name="Badger J.H."/>
            <person name="Fraser C.M."/>
            <person name="Nelson K.E."/>
        </authorList>
    </citation>
    <scope>NUCLEOTIDE SEQUENCE [LARGE SCALE GENOMIC DNA]</scope>
    <source>
        <strain>RM1221</strain>
    </source>
</reference>
<accession>Q5HSI0</accession>
<protein>
    <recommendedName>
        <fullName evidence="1">Small ribosomal subunit protein bS20</fullName>
    </recommendedName>
    <alternativeName>
        <fullName evidence="3">30S ribosomal protein S20</fullName>
    </alternativeName>
</protein>
<dbReference type="EMBL" id="CP000025">
    <property type="protein sequence ID" value="AAW36207.1"/>
    <property type="molecule type" value="Genomic_DNA"/>
</dbReference>
<dbReference type="RefSeq" id="WP_002856547.1">
    <property type="nucleotide sequence ID" value="NC_003912.7"/>
</dbReference>
<dbReference type="SMR" id="Q5HSI0"/>
<dbReference type="KEGG" id="cjr:CJE1783"/>
<dbReference type="HOGENOM" id="CLU_160655_3_0_7"/>
<dbReference type="GO" id="GO:0005829">
    <property type="term" value="C:cytosol"/>
    <property type="evidence" value="ECO:0007669"/>
    <property type="project" value="TreeGrafter"/>
</dbReference>
<dbReference type="GO" id="GO:0015935">
    <property type="term" value="C:small ribosomal subunit"/>
    <property type="evidence" value="ECO:0007669"/>
    <property type="project" value="TreeGrafter"/>
</dbReference>
<dbReference type="GO" id="GO:0070181">
    <property type="term" value="F:small ribosomal subunit rRNA binding"/>
    <property type="evidence" value="ECO:0007669"/>
    <property type="project" value="TreeGrafter"/>
</dbReference>
<dbReference type="GO" id="GO:0003735">
    <property type="term" value="F:structural constituent of ribosome"/>
    <property type="evidence" value="ECO:0007669"/>
    <property type="project" value="InterPro"/>
</dbReference>
<dbReference type="GO" id="GO:0006412">
    <property type="term" value="P:translation"/>
    <property type="evidence" value="ECO:0007669"/>
    <property type="project" value="UniProtKB-UniRule"/>
</dbReference>
<dbReference type="FunFam" id="1.20.58.110:FF:000001">
    <property type="entry name" value="30S ribosomal protein S20"/>
    <property type="match status" value="1"/>
</dbReference>
<dbReference type="Gene3D" id="1.20.58.110">
    <property type="entry name" value="Ribosomal protein S20"/>
    <property type="match status" value="1"/>
</dbReference>
<dbReference type="HAMAP" id="MF_00500">
    <property type="entry name" value="Ribosomal_bS20"/>
    <property type="match status" value="1"/>
</dbReference>
<dbReference type="InterPro" id="IPR002583">
    <property type="entry name" value="Ribosomal_bS20"/>
</dbReference>
<dbReference type="InterPro" id="IPR036510">
    <property type="entry name" value="Ribosomal_bS20_sf"/>
</dbReference>
<dbReference type="NCBIfam" id="TIGR00029">
    <property type="entry name" value="S20"/>
    <property type="match status" value="1"/>
</dbReference>
<dbReference type="PANTHER" id="PTHR33398">
    <property type="entry name" value="30S RIBOSOMAL PROTEIN S20"/>
    <property type="match status" value="1"/>
</dbReference>
<dbReference type="PANTHER" id="PTHR33398:SF1">
    <property type="entry name" value="SMALL RIBOSOMAL SUBUNIT PROTEIN BS20C"/>
    <property type="match status" value="1"/>
</dbReference>
<dbReference type="Pfam" id="PF01649">
    <property type="entry name" value="Ribosomal_S20p"/>
    <property type="match status" value="1"/>
</dbReference>
<dbReference type="SUPFAM" id="SSF46992">
    <property type="entry name" value="Ribosomal protein S20"/>
    <property type="match status" value="1"/>
</dbReference>
<sequence length="87" mass="9817">MANHKSAEKRARQTIKKTERNRFYRTRLKNITKAVREAAANGDKNAANEALKVANKSIHAMVSRGFIKKQTASRRVSRLALLVNKIA</sequence>
<evidence type="ECO:0000255" key="1">
    <source>
        <dbReference type="HAMAP-Rule" id="MF_00500"/>
    </source>
</evidence>
<evidence type="ECO:0000256" key="2">
    <source>
        <dbReference type="SAM" id="MobiDB-lite"/>
    </source>
</evidence>
<evidence type="ECO:0000305" key="3"/>
<feature type="chain" id="PRO_0000167940" description="Small ribosomal subunit protein bS20">
    <location>
        <begin position="1"/>
        <end position="87"/>
    </location>
</feature>
<feature type="region of interest" description="Disordered" evidence="2">
    <location>
        <begin position="1"/>
        <end position="21"/>
    </location>
</feature>
<organism>
    <name type="scientific">Campylobacter jejuni (strain RM1221)</name>
    <dbReference type="NCBI Taxonomy" id="195099"/>
    <lineage>
        <taxon>Bacteria</taxon>
        <taxon>Pseudomonadati</taxon>
        <taxon>Campylobacterota</taxon>
        <taxon>Epsilonproteobacteria</taxon>
        <taxon>Campylobacterales</taxon>
        <taxon>Campylobacteraceae</taxon>
        <taxon>Campylobacter</taxon>
    </lineage>
</organism>
<gene>
    <name evidence="1" type="primary">rpsT</name>
    <name type="ordered locus">CJE1783</name>
</gene>
<name>RS20_CAMJR</name>
<comment type="function">
    <text evidence="1">Binds directly to 16S ribosomal RNA.</text>
</comment>
<comment type="similarity">
    <text evidence="1">Belongs to the bacterial ribosomal protein bS20 family.</text>
</comment>
<keyword id="KW-0687">Ribonucleoprotein</keyword>
<keyword id="KW-0689">Ribosomal protein</keyword>
<keyword id="KW-0694">RNA-binding</keyword>
<keyword id="KW-0699">rRNA-binding</keyword>
<proteinExistence type="inferred from homology"/>